<reference key="1">
    <citation type="journal article" date="1998" name="Science">
        <title>Genome sequence of the nematode C. elegans: a platform for investigating biology.</title>
        <authorList>
            <consortium name="The C. elegans sequencing consortium"/>
        </authorList>
    </citation>
    <scope>NUCLEOTIDE SEQUENCE [LARGE SCALE GENOMIC DNA]</scope>
    <source>
        <strain>Bristol N2</strain>
    </source>
</reference>
<feature type="chain" id="PRO_0000382479" description="Probable cytosolic iron-sulfur protein assembly protein CIAO1 homolog">
    <location>
        <begin position="1"/>
        <end position="337"/>
    </location>
</feature>
<feature type="repeat" description="WD 1">
    <location>
        <begin position="15"/>
        <end position="54"/>
    </location>
</feature>
<feature type="repeat" description="WD 2">
    <location>
        <begin position="65"/>
        <end position="104"/>
    </location>
</feature>
<feature type="repeat" description="WD 3">
    <location>
        <begin position="109"/>
        <end position="148"/>
    </location>
</feature>
<feature type="repeat" description="WD 4">
    <location>
        <begin position="154"/>
        <end position="193"/>
    </location>
</feature>
<feature type="repeat" description="WD 5">
    <location>
        <begin position="199"/>
        <end position="238"/>
    </location>
</feature>
<feature type="repeat" description="WD 6">
    <location>
        <begin position="253"/>
        <end position="292"/>
    </location>
</feature>
<feature type="repeat" description="WD 7">
    <location>
        <begin position="301"/>
        <end position="337"/>
    </location>
</feature>
<organism>
    <name type="scientific">Caenorhabditis elegans</name>
    <dbReference type="NCBI Taxonomy" id="6239"/>
    <lineage>
        <taxon>Eukaryota</taxon>
        <taxon>Metazoa</taxon>
        <taxon>Ecdysozoa</taxon>
        <taxon>Nematoda</taxon>
        <taxon>Chromadorea</taxon>
        <taxon>Rhabditida</taxon>
        <taxon>Rhabditina</taxon>
        <taxon>Rhabditomorpha</taxon>
        <taxon>Rhabditoidea</taxon>
        <taxon>Rhabditidae</taxon>
        <taxon>Peloderinae</taxon>
        <taxon>Caenorhabditis</taxon>
    </lineage>
</organism>
<accession>Q9XW12</accession>
<evidence type="ECO:0000255" key="1">
    <source>
        <dbReference type="HAMAP-Rule" id="MF_03037"/>
    </source>
</evidence>
<proteinExistence type="evidence at protein level"/>
<keyword id="KW-1185">Reference proteome</keyword>
<keyword id="KW-0677">Repeat</keyword>
<keyword id="KW-0853">WD repeat</keyword>
<dbReference type="EMBL" id="AL034393">
    <property type="protein sequence ID" value="CAA22322.2"/>
    <property type="molecule type" value="Genomic_DNA"/>
</dbReference>
<dbReference type="PIR" id="T26531">
    <property type="entry name" value="T26531"/>
</dbReference>
<dbReference type="SMR" id="Q9XW12"/>
<dbReference type="BioGRID" id="38549">
    <property type="interactions" value="2"/>
</dbReference>
<dbReference type="FunCoup" id="Q9XW12">
    <property type="interactions" value="3014"/>
</dbReference>
<dbReference type="IntAct" id="Q9XW12">
    <property type="interactions" value="1"/>
</dbReference>
<dbReference type="STRING" id="6239.Y18D10A.9.1"/>
<dbReference type="PaxDb" id="6239-Y18D10A.9"/>
<dbReference type="PeptideAtlas" id="Q9XW12"/>
<dbReference type="EnsemblMetazoa" id="Y18D10A.9.1">
    <property type="protein sequence ID" value="Y18D10A.9.1"/>
    <property type="gene ID" value="WBGene00012479"/>
</dbReference>
<dbReference type="KEGG" id="cel:CELE_Y18D10A.9"/>
<dbReference type="UCSC" id="Y18D10A.9">
    <property type="organism name" value="c. elegans"/>
</dbReference>
<dbReference type="AGR" id="WB:WBGene00012479"/>
<dbReference type="CTD" id="173152"/>
<dbReference type="WormBase" id="Y18D10A.9">
    <property type="protein sequence ID" value="CE34506"/>
    <property type="gene ID" value="WBGene00012479"/>
</dbReference>
<dbReference type="eggNOG" id="KOG0645">
    <property type="taxonomic scope" value="Eukaryota"/>
</dbReference>
<dbReference type="GeneTree" id="ENSGT00940000158670"/>
<dbReference type="HOGENOM" id="CLU_000288_57_8_1"/>
<dbReference type="InParanoid" id="Q9XW12"/>
<dbReference type="OMA" id="IREIRWS"/>
<dbReference type="OrthoDB" id="284782at2759"/>
<dbReference type="PhylomeDB" id="Q9XW12"/>
<dbReference type="PRO" id="PR:Q9XW12"/>
<dbReference type="Proteomes" id="UP000001940">
    <property type="component" value="Chromosome I"/>
</dbReference>
<dbReference type="Bgee" id="WBGene00012479">
    <property type="expression patterns" value="Expressed in germ line (C elegans) and 4 other cell types or tissues"/>
</dbReference>
<dbReference type="GO" id="GO:0097361">
    <property type="term" value="C:cytosolic [4Fe-4S] assembly targeting complex"/>
    <property type="evidence" value="ECO:0000318"/>
    <property type="project" value="GO_Central"/>
</dbReference>
<dbReference type="GO" id="GO:0016226">
    <property type="term" value="P:iron-sulfur cluster assembly"/>
    <property type="evidence" value="ECO:0000318"/>
    <property type="project" value="GO_Central"/>
</dbReference>
<dbReference type="GO" id="GO:0051604">
    <property type="term" value="P:protein maturation"/>
    <property type="evidence" value="ECO:0000250"/>
    <property type="project" value="UniProtKB"/>
</dbReference>
<dbReference type="CDD" id="cd00200">
    <property type="entry name" value="WD40"/>
    <property type="match status" value="1"/>
</dbReference>
<dbReference type="FunFam" id="2.130.10.10:FF:001947">
    <property type="entry name" value="Probable cytosolic iron-sulfur protein assembly protein CIAO1 homolog"/>
    <property type="match status" value="1"/>
</dbReference>
<dbReference type="Gene3D" id="2.130.10.10">
    <property type="entry name" value="YVTN repeat-like/Quinoprotein amine dehydrogenase"/>
    <property type="match status" value="1"/>
</dbReference>
<dbReference type="HAMAP" id="MF_03037">
    <property type="entry name" value="ciao1"/>
    <property type="match status" value="1"/>
</dbReference>
<dbReference type="InterPro" id="IPR028608">
    <property type="entry name" value="CIAO1/Cia1"/>
</dbReference>
<dbReference type="InterPro" id="IPR020472">
    <property type="entry name" value="G-protein_beta_WD-40_rep"/>
</dbReference>
<dbReference type="InterPro" id="IPR015943">
    <property type="entry name" value="WD40/YVTN_repeat-like_dom_sf"/>
</dbReference>
<dbReference type="InterPro" id="IPR019775">
    <property type="entry name" value="WD40_repeat_CS"/>
</dbReference>
<dbReference type="InterPro" id="IPR036322">
    <property type="entry name" value="WD40_repeat_dom_sf"/>
</dbReference>
<dbReference type="InterPro" id="IPR001680">
    <property type="entry name" value="WD40_rpt"/>
</dbReference>
<dbReference type="PANTHER" id="PTHR19920:SF0">
    <property type="entry name" value="CYTOSOLIC IRON-SULFUR PROTEIN ASSEMBLY PROTEIN CIAO1-RELATED"/>
    <property type="match status" value="1"/>
</dbReference>
<dbReference type="PANTHER" id="PTHR19920">
    <property type="entry name" value="WD40 PROTEIN CIAO1"/>
    <property type="match status" value="1"/>
</dbReference>
<dbReference type="Pfam" id="PF00400">
    <property type="entry name" value="WD40"/>
    <property type="match status" value="7"/>
</dbReference>
<dbReference type="PRINTS" id="PR00320">
    <property type="entry name" value="GPROTEINBRPT"/>
</dbReference>
<dbReference type="SMART" id="SM00320">
    <property type="entry name" value="WD40"/>
    <property type="match status" value="7"/>
</dbReference>
<dbReference type="SUPFAM" id="SSF50978">
    <property type="entry name" value="WD40 repeat-like"/>
    <property type="match status" value="1"/>
</dbReference>
<dbReference type="PROSITE" id="PS00678">
    <property type="entry name" value="WD_REPEATS_1"/>
    <property type="match status" value="1"/>
</dbReference>
<dbReference type="PROSITE" id="PS50082">
    <property type="entry name" value="WD_REPEATS_2"/>
    <property type="match status" value="4"/>
</dbReference>
<dbReference type="PROSITE" id="PS50294">
    <property type="entry name" value="WD_REPEATS_REGION"/>
    <property type="match status" value="1"/>
</dbReference>
<name>CIAO1_CAEEL</name>
<comment type="function">
    <text evidence="1">Essential component of the cytosolic iron-sulfur (Fe/S) protein assembly machinery. Required for the maturation of extramitochondrial Fe/S proteins.</text>
</comment>
<comment type="interaction">
    <interactant intactId="EBI-367932">
        <id>Q9XW12</id>
    </interactant>
    <interactant intactId="EBI-367937">
        <id>O62252</id>
        <label>F45G2.10</label>
    </interactant>
    <organismsDiffer>false</organismsDiffer>
    <experiments>3</experiments>
</comment>
<comment type="similarity">
    <text evidence="1">Belongs to the WD repeat CIA1 family.</text>
</comment>
<gene>
    <name type="ORF">Y18D10A.9</name>
</gene>
<sequence>MLRQIGEFYHQGEKDDTSRVWMTCWHHGGRILASCGDDKAVRVWSLVGEPDSKMRLECRTTLDDSHTRAVRSVAFSNDGKCLVSASFDASVVVYQQEDGEFAEVNKLEGHESEVKCAVFSKSDEFLATCSRDKSVWFWQQDEDEDFSVSSILQPHTQDVKQVAWHPTEDLLVSCSYDSSIRFYRFDGEDWVTQQKIDGCHVGTVWSIAFDTEGHRLVTVGEDHCIQLFVRENIGSKSADQDTWKSVARYDVENTRWPLYSVAWNSTNDVIATGGGDCKIRLFKISSTPESPVIEHLGVVGRHELDVNHVAWNPNPKFSNLLTSASDDGTIRLWELEI</sequence>
<protein>
    <recommendedName>
        <fullName evidence="1">Probable cytosolic iron-sulfur protein assembly protein CIAO1 homolog</fullName>
    </recommendedName>
</protein>